<proteinExistence type="evidence at transcript level"/>
<accession>Q5R5S4</accession>
<evidence type="ECO:0000250" key="1">
    <source>
        <dbReference type="UniProtKB" id="Q3TXS7"/>
    </source>
</evidence>
<evidence type="ECO:0000250" key="2">
    <source>
        <dbReference type="UniProtKB" id="Q99460"/>
    </source>
</evidence>
<evidence type="ECO:0000256" key="3">
    <source>
        <dbReference type="SAM" id="MobiDB-lite"/>
    </source>
</evidence>
<evidence type="ECO:0000305" key="4"/>
<keyword id="KW-0007">Acetylation</keyword>
<keyword id="KW-0597">Phosphoprotein</keyword>
<keyword id="KW-0647">Proteasome</keyword>
<keyword id="KW-1185">Reference proteome</keyword>
<keyword id="KW-0677">Repeat</keyword>
<sequence>MITSAAGIISLLDEDEPQLKEFALHKLNAVVNDFWAEISESVDKIEVLYEDEGFRSRQFAALVASKVFYHLGAFEESLNYALGAGDLFNVNDNSEYVETIIAKCIDHYTKQCVENADLPEGEKKPIDQRLEGIVNKMFQRCLDDHKYKQAIGIALETRRLDVFEKTILESNDVPGMLAYSLKLCMSLMQNKQFRNKVLRVLVKIYMNLEKPDFINVCQCLIFLDDPQAVSDILEKLVKEDNLLMAYQICFDLYESASQQFLSSVIQNLRTVGTPIASVPGSTNTGTVPGSEKDSDSMETEEKTGSAFVGKTPEASPEPKDQTLKMIKILSGEMAIELHLQFLIRNNNTDLMILKNTKDAVRNSVCHTATVIANSFMHCGTTSDQFLRDNLEWLARATNWAKFTATASLGVIHKGHEKEALQLMATYLPKDTSPGSAYQEGGGLYALGLIHANHGGDIIDYLLNQLKNASNDIVRHGGSLGLGLAAMGTARQDVYDLLKTNLYQDDAVTGEAAGLALGLVMLGSKNAQAIEDMVGYAQETQHEKILRGLAVGIALVMYGRMEEADALIESLCRDKDPILRRSGMYTVAMAYCGSGNNKAIRRLLHVAVSDVNDDVRRAAVESLGFILFRTPEQCPSVVSLLSESYNPHVRYGAAMALGICCAGTGNKEAINLLEPMTNDPVNYVRQGALIASALIMIQQTEITCPKVNQFRQLYSKVINDKHDDVMAKFGAILAQGILDAGGHNVTISLQSRTGHTHMPSVVGVLVFTQFWFWFPLSHFLSLAYTPTCVIGLNKDLKMPKVQYKSNCKPSTFAYPAPLEVPKEKEKEKVSTAVLSITAKAKKKEKEKEKKEEEKMEVDEAEKKEEKEKKKEPEPNFQLLDNPARVMPAQLKVLTMPETCRYQPFKPLSIGGIIILKDTSEDIEELVEPVAAHGPKIEEEEQEPEPPEPFEYIDD</sequence>
<protein>
    <recommendedName>
        <fullName>26S proteasome non-ATPase regulatory subunit 1</fullName>
    </recommendedName>
    <alternativeName>
        <fullName>26S proteasome regulatory subunit RPN2</fullName>
    </alternativeName>
    <alternativeName>
        <fullName>26S proteasome regulatory subunit S1</fullName>
    </alternativeName>
</protein>
<dbReference type="EMBL" id="CR860782">
    <property type="protein sequence ID" value="CAH92892.1"/>
    <property type="molecule type" value="mRNA"/>
</dbReference>
<dbReference type="RefSeq" id="NP_001126695.1">
    <property type="nucleotide sequence ID" value="NM_001133223.1"/>
</dbReference>
<dbReference type="SMR" id="Q5R5S4"/>
<dbReference type="FunCoup" id="Q5R5S4">
    <property type="interactions" value="2665"/>
</dbReference>
<dbReference type="STRING" id="9601.ENSPPYP00000014825"/>
<dbReference type="Ensembl" id="ENSPPYT00000015422.3">
    <property type="protein sequence ID" value="ENSPPYP00000014825.2"/>
    <property type="gene ID" value="ENSPPYG00000013261.3"/>
</dbReference>
<dbReference type="GeneID" id="100173695"/>
<dbReference type="KEGG" id="pon:100173695"/>
<dbReference type="CTD" id="5707"/>
<dbReference type="eggNOG" id="KOG2062">
    <property type="taxonomic scope" value="Eukaryota"/>
</dbReference>
<dbReference type="GeneTree" id="ENSGT00940000153386"/>
<dbReference type="HOGENOM" id="CLU_002323_0_0_1"/>
<dbReference type="InParanoid" id="Q5R5S4"/>
<dbReference type="OMA" id="IMFGRQE"/>
<dbReference type="OrthoDB" id="261572at2759"/>
<dbReference type="TreeFam" id="TF105742"/>
<dbReference type="Proteomes" id="UP000001595">
    <property type="component" value="Chromosome 2B"/>
</dbReference>
<dbReference type="GO" id="GO:0005634">
    <property type="term" value="C:nucleus"/>
    <property type="evidence" value="ECO:0007669"/>
    <property type="project" value="TreeGrafter"/>
</dbReference>
<dbReference type="GO" id="GO:0022624">
    <property type="term" value="C:proteasome accessory complex"/>
    <property type="evidence" value="ECO:0000250"/>
    <property type="project" value="UniProtKB"/>
</dbReference>
<dbReference type="GO" id="GO:0008540">
    <property type="term" value="C:proteasome regulatory particle, base subcomplex"/>
    <property type="evidence" value="ECO:0007669"/>
    <property type="project" value="TreeGrafter"/>
</dbReference>
<dbReference type="GO" id="GO:0034515">
    <property type="term" value="C:proteasome storage granule"/>
    <property type="evidence" value="ECO:0007669"/>
    <property type="project" value="TreeGrafter"/>
</dbReference>
<dbReference type="GO" id="GO:0030234">
    <property type="term" value="F:enzyme regulator activity"/>
    <property type="evidence" value="ECO:0007669"/>
    <property type="project" value="InterPro"/>
</dbReference>
<dbReference type="GO" id="GO:0031625">
    <property type="term" value="F:ubiquitin protein ligase binding"/>
    <property type="evidence" value="ECO:0007669"/>
    <property type="project" value="Ensembl"/>
</dbReference>
<dbReference type="GO" id="GO:0043161">
    <property type="term" value="P:proteasome-mediated ubiquitin-dependent protein catabolic process"/>
    <property type="evidence" value="ECO:0007669"/>
    <property type="project" value="TreeGrafter"/>
</dbReference>
<dbReference type="GO" id="GO:0042176">
    <property type="term" value="P:regulation of protein catabolic process"/>
    <property type="evidence" value="ECO:0007669"/>
    <property type="project" value="InterPro"/>
</dbReference>
<dbReference type="FunFam" id="1.25.10.10:FF:000017">
    <property type="entry name" value="26S proteasome non-ATPase regulatory subunit 1"/>
    <property type="match status" value="1"/>
</dbReference>
<dbReference type="Gene3D" id="1.25.10.10">
    <property type="entry name" value="Leucine-rich Repeat Variant"/>
    <property type="match status" value="1"/>
</dbReference>
<dbReference type="InterPro" id="IPR016642">
    <property type="entry name" value="26S_Psome_Rpn2"/>
</dbReference>
<dbReference type="InterPro" id="IPR011989">
    <property type="entry name" value="ARM-like"/>
</dbReference>
<dbReference type="InterPro" id="IPR016024">
    <property type="entry name" value="ARM-type_fold"/>
</dbReference>
<dbReference type="InterPro" id="IPR002015">
    <property type="entry name" value="Proteasome/cyclosome_rpt"/>
</dbReference>
<dbReference type="InterPro" id="IPR048570">
    <property type="entry name" value="PSMD1_RPN2_N"/>
</dbReference>
<dbReference type="InterPro" id="IPR040623">
    <property type="entry name" value="RPN2_C"/>
</dbReference>
<dbReference type="PANTHER" id="PTHR10943">
    <property type="entry name" value="26S PROTEASOME NON-ATPASE REGULATORY SUBUNIT"/>
    <property type="match status" value="1"/>
</dbReference>
<dbReference type="PANTHER" id="PTHR10943:SF2">
    <property type="entry name" value="26S PROTEASOME NON-ATPASE REGULATORY SUBUNIT 1"/>
    <property type="match status" value="1"/>
</dbReference>
<dbReference type="Pfam" id="PF13646">
    <property type="entry name" value="HEAT_2"/>
    <property type="match status" value="1"/>
</dbReference>
<dbReference type="Pfam" id="PF01851">
    <property type="entry name" value="PC_rep"/>
    <property type="match status" value="4"/>
</dbReference>
<dbReference type="Pfam" id="PF18004">
    <property type="entry name" value="RPN2_C"/>
    <property type="match status" value="1"/>
</dbReference>
<dbReference type="Pfam" id="PF21505">
    <property type="entry name" value="RPN2_N"/>
    <property type="match status" value="1"/>
</dbReference>
<dbReference type="PIRSF" id="PIRSF015947">
    <property type="entry name" value="26S_Psome_Rpn2"/>
    <property type="match status" value="1"/>
</dbReference>
<dbReference type="SUPFAM" id="SSF48371">
    <property type="entry name" value="ARM repeat"/>
    <property type="match status" value="1"/>
</dbReference>
<gene>
    <name type="primary">PSMD1</name>
</gene>
<reference key="1">
    <citation type="submission" date="2004-11" db="EMBL/GenBank/DDBJ databases">
        <authorList>
            <consortium name="The German cDNA consortium"/>
        </authorList>
    </citation>
    <scope>NUCLEOTIDE SEQUENCE [LARGE SCALE MRNA]</scope>
    <source>
        <tissue>Brain cortex</tissue>
    </source>
</reference>
<feature type="chain" id="PRO_0000312650" description="26S proteasome non-ATPase regulatory subunit 1">
    <location>
        <begin position="1"/>
        <end position="953"/>
    </location>
</feature>
<feature type="repeat" description="PC 1">
    <location>
        <begin position="403"/>
        <end position="436"/>
    </location>
</feature>
<feature type="repeat" description="PC 2">
    <location>
        <begin position="441"/>
        <end position="474"/>
    </location>
</feature>
<feature type="repeat" description="PC 3">
    <location>
        <begin position="476"/>
        <end position="510"/>
    </location>
</feature>
<feature type="repeat" description="PC 4">
    <location>
        <begin position="511"/>
        <end position="545"/>
    </location>
</feature>
<feature type="repeat" description="PC 5">
    <location>
        <begin position="547"/>
        <end position="580"/>
    </location>
</feature>
<feature type="repeat" description="PC 6">
    <location>
        <begin position="581"/>
        <end position="616"/>
    </location>
</feature>
<feature type="repeat" description="PC 7">
    <location>
        <begin position="617"/>
        <end position="649"/>
    </location>
</feature>
<feature type="repeat" description="PC 8">
    <location>
        <begin position="651"/>
        <end position="685"/>
    </location>
</feature>
<feature type="repeat" description="PC 9">
    <location>
        <begin position="686"/>
        <end position="726"/>
    </location>
</feature>
<feature type="repeat" description="PC 10">
    <location>
        <begin position="729"/>
        <end position="761"/>
    </location>
</feature>
<feature type="region of interest" description="Disordered" evidence="3">
    <location>
        <begin position="279"/>
        <end position="318"/>
    </location>
</feature>
<feature type="region of interest" description="Disordered" evidence="3">
    <location>
        <begin position="839"/>
        <end position="881"/>
    </location>
</feature>
<feature type="region of interest" description="Disordered" evidence="3">
    <location>
        <begin position="930"/>
        <end position="953"/>
    </location>
</feature>
<feature type="compositionally biased region" description="Basic and acidic residues" evidence="3">
    <location>
        <begin position="290"/>
        <end position="303"/>
    </location>
</feature>
<feature type="compositionally biased region" description="Basic and acidic residues" evidence="3">
    <location>
        <begin position="842"/>
        <end position="852"/>
    </location>
</feature>
<feature type="compositionally biased region" description="Basic and acidic residues" evidence="3">
    <location>
        <begin position="859"/>
        <end position="872"/>
    </location>
</feature>
<feature type="compositionally biased region" description="Acidic residues" evidence="3">
    <location>
        <begin position="936"/>
        <end position="953"/>
    </location>
</feature>
<feature type="modified residue" description="N-acetylmethionine; partial" evidence="2">
    <location>
        <position position="1"/>
    </location>
</feature>
<feature type="modified residue" description="Phosphothreonine" evidence="2">
    <location>
        <position position="273"/>
    </location>
</feature>
<feature type="modified residue" description="Phosphoserine" evidence="2">
    <location>
        <position position="290"/>
    </location>
</feature>
<feature type="modified residue" description="N6-acetyllysine" evidence="2">
    <location>
        <position position="310"/>
    </location>
</feature>
<feature type="modified residue" description="Phosphothreonine" evidence="2">
    <location>
        <position position="311"/>
    </location>
</feature>
<feature type="modified residue" description="Phosphoserine" evidence="2">
    <location>
        <position position="315"/>
    </location>
</feature>
<feature type="modified residue" description="N6-acetyllysine" evidence="1">
    <location>
        <position position="720"/>
    </location>
</feature>
<feature type="modified residue" description="Phosphothreonine" evidence="2">
    <location>
        <position position="830"/>
    </location>
</feature>
<feature type="modified residue" description="Phosphoserine" evidence="2">
    <location>
        <position position="834"/>
    </location>
</feature>
<name>PSMD1_PONAB</name>
<comment type="function">
    <text evidence="2">Component of the 26S proteasome, a multiprotein complex involved in the ATP-dependent degradation of ubiquitinated proteins. This complex plays a key role in the maintenance of protein homeostasis by removing misfolded or damaged proteins, which could impair cellular functions, and by removing proteins whose functions are no longer required. Therefore, the proteasome participates in numerous cellular processes, including cell cycle progression, apoptosis, or DNA damage repair.</text>
</comment>
<comment type="subunit">
    <text evidence="2">Component of the 19S proteasome regulatory particle complex. The 26S proteasome consists of a 20S core particle (CP) and two 19S regulatory subunits (RP). The regulatory particle is made of a lid composed of 9 subunits, a base containing 6 ATPases and few additional components including PSMD1. Interacts with ADRM1. Interacts with ZFAND1 (By similarity).</text>
</comment>
<comment type="similarity">
    <text evidence="4">Belongs to the proteasome subunit S1 family.</text>
</comment>
<organism>
    <name type="scientific">Pongo abelii</name>
    <name type="common">Sumatran orangutan</name>
    <name type="synonym">Pongo pygmaeus abelii</name>
    <dbReference type="NCBI Taxonomy" id="9601"/>
    <lineage>
        <taxon>Eukaryota</taxon>
        <taxon>Metazoa</taxon>
        <taxon>Chordata</taxon>
        <taxon>Craniata</taxon>
        <taxon>Vertebrata</taxon>
        <taxon>Euteleostomi</taxon>
        <taxon>Mammalia</taxon>
        <taxon>Eutheria</taxon>
        <taxon>Euarchontoglires</taxon>
        <taxon>Primates</taxon>
        <taxon>Haplorrhini</taxon>
        <taxon>Catarrhini</taxon>
        <taxon>Hominidae</taxon>
        <taxon>Pongo</taxon>
    </lineage>
</organism>